<proteinExistence type="inferred from homology"/>
<keyword id="KW-0414">Isoprene biosynthesis</keyword>
<keyword id="KW-0456">Lyase</keyword>
<keyword id="KW-0460">Magnesium</keyword>
<keyword id="KW-0479">Metal-binding</keyword>
<keyword id="KW-0511">Multifunctional enzyme</keyword>
<keyword id="KW-0808">Transferase</keyword>
<sequence>MASEVIVISDHARKEAGTVSVFPVLIHTDYARVIEDVRKVEDQFNSEMKTSIDTKTTADFPELGLAHVTAFTIPYCRPDRLSIMTRLTEITFFNDDYYDDAGVEKILDYNNHLRECFGGRAEDELTKASAVTKSKQLQASVLVEMHYIDSELARDMMLTYNRILEVTSLGKNAGLKSLDEYLPFRIGNSGIEVYQDMSCFGMGVKLTKEEKEKLDPIVIAAHNSTTLINDYHSWPKEVRKYFNEVQATGKADLPVNAVCIFMQTEGLSEQASRQRVREEIIAQQKSHLAMIQDLVEQEGPLPEKYYMYFKAAQYTASGSEYWAAITSRYPTKTELNQPEVIIVDGELKYESSEIQQTPKQIATTFNGIPESAKSIIESKVNGTSAHIPDIRHSPADGAQTHHLISDGQFREVINGHANVHTNGKANGTSQGEDLEVYEVTTGNFQRAPEDTVLAPYQYIASLPSKNIRNKFIDALNLWLGVPPLALSSIKRIVEYLHHSSLMLDDIEDNSTLRRGKPCTHMLYGNAQTINAANYAFVSAFAEVQNLQSPSAITIFIREVQNMHRGQSLDLSWKYHTHCPTVDEYMMMVDNKTGAMFRLCVQLMQAESSVPCQKITQSDFITQLGRYFQIRDDYQNLVSSEYTTQKGFCEDLDEGKISLPLIYTIMDSSPEASVVKGIFHHRLREGGLPLHLKEYILSQMEEKGALSATHSLLQKMQKELIEGLHRVEETFGSKNALVELMLRRLWV</sequence>
<name>QNN1_EMEVA</name>
<accession>A0A1Y1C7Q5</accession>
<evidence type="ECO:0000250" key="1">
    <source>
        <dbReference type="UniProtKB" id="A1C8C3"/>
    </source>
</evidence>
<evidence type="ECO:0000250" key="2">
    <source>
        <dbReference type="UniProtKB" id="C9K2Q3"/>
    </source>
</evidence>
<evidence type="ECO:0000250" key="3">
    <source>
        <dbReference type="UniProtKB" id="Q12051"/>
    </source>
</evidence>
<evidence type="ECO:0000250" key="4">
    <source>
        <dbReference type="UniProtKB" id="Q40577"/>
    </source>
</evidence>
<evidence type="ECO:0000269" key="5">
    <source>
    </source>
</evidence>
<evidence type="ECO:0000303" key="6">
    <source>
    </source>
</evidence>
<evidence type="ECO:0000305" key="7"/>
<feature type="chain" id="PRO_0000452689" description="Quiannulatene synthase">
    <location>
        <begin position="1"/>
        <end position="746"/>
    </location>
</feature>
<feature type="region of interest" description="Sesterterpenoid synthase" evidence="1">
    <location>
        <begin position="1"/>
        <end position="336"/>
    </location>
</feature>
<feature type="region of interest" description="Geranylfarnesyl diphosphate synthase" evidence="1">
    <location>
        <begin position="338"/>
        <end position="746"/>
    </location>
</feature>
<feature type="binding site" evidence="4">
    <location>
        <position position="95"/>
    </location>
    <ligand>
        <name>Mg(2+)</name>
        <dbReference type="ChEBI" id="CHEBI:18420"/>
        <label>1</label>
    </ligand>
</feature>
<feature type="binding site" evidence="4">
    <location>
        <position position="95"/>
    </location>
    <ligand>
        <name>Mg(2+)</name>
        <dbReference type="ChEBI" id="CHEBI:18420"/>
        <label>2</label>
    </ligand>
</feature>
<feature type="binding site" evidence="3">
    <location>
        <position position="465"/>
    </location>
    <ligand>
        <name>isopentenyl diphosphate</name>
        <dbReference type="ChEBI" id="CHEBI:128769"/>
    </ligand>
</feature>
<feature type="binding site" evidence="3">
    <location>
        <position position="468"/>
    </location>
    <ligand>
        <name>isopentenyl diphosphate</name>
        <dbReference type="ChEBI" id="CHEBI:128769"/>
    </ligand>
</feature>
<feature type="binding site" evidence="3">
    <location>
        <position position="497"/>
    </location>
    <ligand>
        <name>isopentenyl diphosphate</name>
        <dbReference type="ChEBI" id="CHEBI:128769"/>
    </ligand>
</feature>
<feature type="binding site" evidence="3">
    <location>
        <position position="504"/>
    </location>
    <ligand>
        <name>Mg(2+)</name>
        <dbReference type="ChEBI" id="CHEBI:18420"/>
        <label>3</label>
    </ligand>
</feature>
<feature type="binding site" evidence="3">
    <location>
        <position position="504"/>
    </location>
    <ligand>
        <name>Mg(2+)</name>
        <dbReference type="ChEBI" id="CHEBI:18420"/>
        <label>4</label>
    </ligand>
</feature>
<feature type="binding site" evidence="3">
    <location>
        <position position="508"/>
    </location>
    <ligand>
        <name>Mg(2+)</name>
        <dbReference type="ChEBI" id="CHEBI:18420"/>
        <label>3</label>
    </ligand>
</feature>
<feature type="binding site" evidence="3">
    <location>
        <position position="508"/>
    </location>
    <ligand>
        <name>Mg(2+)</name>
        <dbReference type="ChEBI" id="CHEBI:18420"/>
        <label>4</label>
    </ligand>
</feature>
<feature type="binding site" evidence="3">
    <location>
        <position position="513"/>
    </location>
    <ligand>
        <name>dimethylallyl diphosphate</name>
        <dbReference type="ChEBI" id="CHEBI:57623"/>
    </ligand>
</feature>
<feature type="binding site" evidence="3">
    <location>
        <position position="514"/>
    </location>
    <ligand>
        <name>isopentenyl diphosphate</name>
        <dbReference type="ChEBI" id="CHEBI:128769"/>
    </ligand>
</feature>
<feature type="binding site" evidence="3">
    <location>
        <position position="591"/>
    </location>
    <ligand>
        <name>dimethylallyl diphosphate</name>
        <dbReference type="ChEBI" id="CHEBI:57623"/>
    </ligand>
</feature>
<feature type="binding site" evidence="3">
    <location>
        <position position="592"/>
    </location>
    <ligand>
        <name>dimethylallyl diphosphate</name>
        <dbReference type="ChEBI" id="CHEBI:57623"/>
    </ligand>
</feature>
<feature type="binding site" evidence="3">
    <location>
        <position position="628"/>
    </location>
    <ligand>
        <name>dimethylallyl diphosphate</name>
        <dbReference type="ChEBI" id="CHEBI:57623"/>
    </ligand>
</feature>
<feature type="binding site" evidence="3">
    <location>
        <position position="635"/>
    </location>
    <ligand>
        <name>dimethylallyl diphosphate</name>
        <dbReference type="ChEBI" id="CHEBI:57623"/>
    </ligand>
</feature>
<feature type="binding site" evidence="3">
    <location>
        <position position="645"/>
    </location>
    <ligand>
        <name>dimethylallyl diphosphate</name>
        <dbReference type="ChEBI" id="CHEBI:57623"/>
    </ligand>
</feature>
<gene>
    <name evidence="6" type="primary">EvQS</name>
</gene>
<dbReference type="EC" id="4.2.3.-" evidence="6"/>
<dbReference type="EC" id="2.5.1.29" evidence="2"/>
<dbReference type="EMBL" id="LC155210">
    <property type="protein sequence ID" value="BAX76657.1"/>
    <property type="molecule type" value="Genomic_DNA"/>
</dbReference>
<dbReference type="SMR" id="A0A1Y1C7Q5"/>
<dbReference type="UniPathway" id="UPA00213"/>
<dbReference type="GO" id="GO:0004311">
    <property type="term" value="F:geranylgeranyl diphosphate synthase activity"/>
    <property type="evidence" value="ECO:0007669"/>
    <property type="project" value="UniProtKB-EC"/>
</dbReference>
<dbReference type="GO" id="GO:0016829">
    <property type="term" value="F:lyase activity"/>
    <property type="evidence" value="ECO:0007669"/>
    <property type="project" value="UniProtKB-KW"/>
</dbReference>
<dbReference type="GO" id="GO:0046872">
    <property type="term" value="F:metal ion binding"/>
    <property type="evidence" value="ECO:0007669"/>
    <property type="project" value="UniProtKB-KW"/>
</dbReference>
<dbReference type="GO" id="GO:0046165">
    <property type="term" value="P:alcohol biosynthetic process"/>
    <property type="evidence" value="ECO:0007669"/>
    <property type="project" value="UniProtKB-ARBA"/>
</dbReference>
<dbReference type="GO" id="GO:0043386">
    <property type="term" value="P:mycotoxin biosynthetic process"/>
    <property type="evidence" value="ECO:0007669"/>
    <property type="project" value="UniProtKB-ARBA"/>
</dbReference>
<dbReference type="GO" id="GO:0016114">
    <property type="term" value="P:terpenoid biosynthetic process"/>
    <property type="evidence" value="ECO:0007669"/>
    <property type="project" value="UniProtKB-UniPathway"/>
</dbReference>
<dbReference type="CDD" id="cd00685">
    <property type="entry name" value="Trans_IPPS_HT"/>
    <property type="match status" value="1"/>
</dbReference>
<dbReference type="Gene3D" id="1.10.600.10">
    <property type="entry name" value="Farnesyl Diphosphate Synthase"/>
    <property type="match status" value="2"/>
</dbReference>
<dbReference type="InterPro" id="IPR008949">
    <property type="entry name" value="Isoprenoid_synthase_dom_sf"/>
</dbReference>
<dbReference type="InterPro" id="IPR000092">
    <property type="entry name" value="Polyprenyl_synt"/>
</dbReference>
<dbReference type="InterPro" id="IPR033749">
    <property type="entry name" value="Polyprenyl_synt_CS"/>
</dbReference>
<dbReference type="PANTHER" id="PTHR12001">
    <property type="entry name" value="GERANYLGERANYL PYROPHOSPHATE SYNTHASE"/>
    <property type="match status" value="1"/>
</dbReference>
<dbReference type="PANTHER" id="PTHR12001:SF72">
    <property type="entry name" value="THIJ_PFPI FAMILY PROTEIN (AFU_ORTHOLOGUE AFUA_3G01210)-RELATED"/>
    <property type="match status" value="1"/>
</dbReference>
<dbReference type="Pfam" id="PF00348">
    <property type="entry name" value="polyprenyl_synt"/>
    <property type="match status" value="1"/>
</dbReference>
<dbReference type="Pfam" id="PF19086">
    <property type="entry name" value="Terpene_syn_C_2"/>
    <property type="match status" value="1"/>
</dbReference>
<dbReference type="SFLD" id="SFLDS00005">
    <property type="entry name" value="Isoprenoid_Synthase_Type_I"/>
    <property type="match status" value="1"/>
</dbReference>
<dbReference type="SUPFAM" id="SSF48576">
    <property type="entry name" value="Terpenoid synthases"/>
    <property type="match status" value="2"/>
</dbReference>
<dbReference type="PROSITE" id="PS00723">
    <property type="entry name" value="POLYPRENYL_SYNTHASE_1"/>
    <property type="match status" value="1"/>
</dbReference>
<dbReference type="PROSITE" id="PS00444">
    <property type="entry name" value="POLYPRENYL_SYNTHASE_2"/>
    <property type="match status" value="1"/>
</dbReference>
<reference key="1">
    <citation type="journal article" date="2016" name="J. Am. Chem. Soc.">
        <title>Genome-based Discovery of an unprecedented cyclization mode in fungal sesterterpenoid biosynthesis.</title>
        <authorList>
            <person name="Okada M."/>
            <person name="Matsuda Y."/>
            <person name="Mitsuhashi T."/>
            <person name="Hoshino S."/>
            <person name="Mori T."/>
            <person name="Nakagawa K."/>
            <person name="Quan Z."/>
            <person name="Qin B."/>
            <person name="Zhang H."/>
            <person name="Hayashi F."/>
            <person name="Kawaide H."/>
            <person name="Abe I."/>
        </authorList>
    </citation>
    <scope>NUCLEOTIDE SEQUENCE [GENOMIC DNA]</scope>
    <scope>FUNCTION</scope>
    <scope>PATHWAY</scope>
    <source>
        <strain>ATCC 12069 / CBS 136.55 / IMI 60316 / NBRC 32302</strain>
    </source>
</reference>
<protein>
    <recommendedName>
        <fullName evidence="6">Quiannulatene synthase</fullName>
        <shortName evidence="6">QS</shortName>
    </recommendedName>
    <alternativeName>
        <fullName evidence="6">Bifunctional sesterterpene synthase EvQS</fullName>
    </alternativeName>
    <alternativeName>
        <fullName evidence="6">Quiannulatic acid biosynthesis cluster protein EvQS</fullName>
    </alternativeName>
    <domain>
        <recommendedName>
            <fullName evidence="6">Sesterterpenoid synthase</fullName>
            <ecNumber evidence="6">4.2.3.-</ecNumber>
        </recommendedName>
        <alternativeName>
            <fullName evidence="2">Geranylgeranyl diphosphate synthase</fullName>
            <shortName evidence="2">GGDP synthase</shortName>
            <shortName evidence="2">GGS</shortName>
            <ecNumber evidence="2">2.5.1.29</ecNumber>
        </alternativeName>
    </domain>
</protein>
<organism>
    <name type="scientific">Emericella variicolor</name>
    <name type="common">Aspergillus stellatus</name>
    <dbReference type="NCBI Taxonomy" id="1549217"/>
    <lineage>
        <taxon>Eukaryota</taxon>
        <taxon>Fungi</taxon>
        <taxon>Dikarya</taxon>
        <taxon>Ascomycota</taxon>
        <taxon>Pezizomycotina</taxon>
        <taxon>Eurotiomycetes</taxon>
        <taxon>Eurotiomycetidae</taxon>
        <taxon>Eurotiales</taxon>
        <taxon>Aspergillaceae</taxon>
        <taxon>Aspergillus</taxon>
        <taxon>Aspergillus subgen. Nidulantes</taxon>
    </lineage>
</organism>
<comment type="function">
    <text evidence="5">Bifunctional sesterterpene synthase; part of the gene cluster that mediates the biosynthesis of the pentacyclic sesterterpene quiannulatic acid (PubMed:27447198). The first step of the pathway is performed by the sesterterpene synthase (QS) that possesses both prenyl transferase and terpene cyclase activity, converting isopentenyl diphosphate and dimethylallyl diphosphate into geranylfarnesyl diphosphate (GFPP) and further converting GFPP into quiannulatene via an unprecedented cyclization mode which involves three rounds of hydride shifts and two successive C-C bond migrations to construct the 5-6-5-5-5 fused ring (PubMed:27447198). The cytochrome P450 monooxygenase Qnn-P450 then oxidizes quiannulatene at C-19 in 3 successive reactions to afford quiannulatic acid (PubMed:27447198).</text>
</comment>
<comment type="catalytic activity">
    <reaction evidence="5">
        <text>isopentenyl diphosphate + (2E,6E)-farnesyl diphosphate = (2E,6E,10E)-geranylgeranyl diphosphate + diphosphate</text>
        <dbReference type="Rhea" id="RHEA:17653"/>
        <dbReference type="ChEBI" id="CHEBI:33019"/>
        <dbReference type="ChEBI" id="CHEBI:58756"/>
        <dbReference type="ChEBI" id="CHEBI:128769"/>
        <dbReference type="ChEBI" id="CHEBI:175763"/>
        <dbReference type="EC" id="2.5.1.29"/>
    </reaction>
    <physiologicalReaction direction="left-to-right" evidence="5">
        <dbReference type="Rhea" id="RHEA:17654"/>
    </physiologicalReaction>
</comment>
<comment type="catalytic activity">
    <reaction evidence="5">
        <text>(2E,6E,10E,14E)-geranylfarnesyl diphosphate = quiannulatene + diphosphate</text>
        <dbReference type="Rhea" id="RHEA:66864"/>
        <dbReference type="ChEBI" id="CHEBI:33019"/>
        <dbReference type="ChEBI" id="CHEBI:57907"/>
        <dbReference type="ChEBI" id="CHEBI:167518"/>
    </reaction>
    <physiologicalReaction direction="left-to-right" evidence="5">
        <dbReference type="Rhea" id="RHEA:66865"/>
    </physiologicalReaction>
</comment>
<comment type="cofactor">
    <cofactor evidence="3 4">
        <name>Mg(2+)</name>
        <dbReference type="ChEBI" id="CHEBI:18420"/>
    </cofactor>
    <text evidence="3 4">Binds 4 Mg(2+) ions per subunit.</text>
</comment>
<comment type="pathway">
    <text evidence="5">Secondary metabolite biosynthesis; terpenoid biosynthesis.</text>
</comment>
<comment type="similarity">
    <text evidence="7">In the N-terminal section; belongs to the terpene synthase family.</text>
</comment>
<comment type="similarity">
    <text evidence="7">In the C-terminal section; belongs to the FPP/GGPP synthase family.</text>
</comment>